<gene>
    <name type="primary">gatad1</name>
</gene>
<dbReference type="EMBL" id="BC044066">
    <property type="protein sequence ID" value="AAH44066.1"/>
    <property type="molecule type" value="mRNA"/>
</dbReference>
<dbReference type="RefSeq" id="NP_001080603.1">
    <property type="nucleotide sequence ID" value="NM_001087134.1"/>
</dbReference>
<dbReference type="DNASU" id="380295"/>
<dbReference type="GeneID" id="380295"/>
<dbReference type="KEGG" id="xla:380295"/>
<dbReference type="AGR" id="Xenbase:XB-GENE-6253912"/>
<dbReference type="CTD" id="380295"/>
<dbReference type="Xenbase" id="XB-GENE-6253912">
    <property type="gene designation" value="gatad1.L"/>
</dbReference>
<dbReference type="OrthoDB" id="9994231at2759"/>
<dbReference type="Proteomes" id="UP000186698">
    <property type="component" value="Chromosome 6L"/>
</dbReference>
<dbReference type="Bgee" id="380295">
    <property type="expression patterns" value="Expressed in blastula and 19 other cell types or tissues"/>
</dbReference>
<dbReference type="GO" id="GO:0005634">
    <property type="term" value="C:nucleus"/>
    <property type="evidence" value="ECO:0000250"/>
    <property type="project" value="UniProtKB"/>
</dbReference>
<dbReference type="GO" id="GO:0043565">
    <property type="term" value="F:sequence-specific DNA binding"/>
    <property type="evidence" value="ECO:0007669"/>
    <property type="project" value="InterPro"/>
</dbReference>
<dbReference type="GO" id="GO:0008270">
    <property type="term" value="F:zinc ion binding"/>
    <property type="evidence" value="ECO:0007669"/>
    <property type="project" value="UniProtKB-KW"/>
</dbReference>
<dbReference type="GO" id="GO:0006325">
    <property type="term" value="P:chromatin organization"/>
    <property type="evidence" value="ECO:0000318"/>
    <property type="project" value="GO_Central"/>
</dbReference>
<dbReference type="GO" id="GO:0006355">
    <property type="term" value="P:regulation of DNA-templated transcription"/>
    <property type="evidence" value="ECO:0007669"/>
    <property type="project" value="InterPro"/>
</dbReference>
<dbReference type="Gene3D" id="3.30.50.10">
    <property type="entry name" value="Erythroid Transcription Factor GATA-1, subunit A"/>
    <property type="match status" value="1"/>
</dbReference>
<dbReference type="InterPro" id="IPR039050">
    <property type="entry name" value="GATAD1"/>
</dbReference>
<dbReference type="InterPro" id="IPR000679">
    <property type="entry name" value="Znf_GATA"/>
</dbReference>
<dbReference type="InterPro" id="IPR013088">
    <property type="entry name" value="Znf_NHR/GATA"/>
</dbReference>
<dbReference type="PANTHER" id="PTHR13340">
    <property type="entry name" value="GATA ZINC FINGER DOMAIN-CONTAINING"/>
    <property type="match status" value="1"/>
</dbReference>
<dbReference type="PANTHER" id="PTHR13340:SF2">
    <property type="entry name" value="GATA ZINC FINGER DOMAIN-CONTAINING PROTEIN 1"/>
    <property type="match status" value="1"/>
</dbReference>
<dbReference type="SUPFAM" id="SSF57716">
    <property type="entry name" value="Glucocorticoid receptor-like (DNA-binding domain)"/>
    <property type="match status" value="1"/>
</dbReference>
<dbReference type="PROSITE" id="PS50114">
    <property type="entry name" value="GATA_ZN_FINGER_2"/>
    <property type="match status" value="1"/>
</dbReference>
<organism>
    <name type="scientific">Xenopus laevis</name>
    <name type="common">African clawed frog</name>
    <dbReference type="NCBI Taxonomy" id="8355"/>
    <lineage>
        <taxon>Eukaryota</taxon>
        <taxon>Metazoa</taxon>
        <taxon>Chordata</taxon>
        <taxon>Craniata</taxon>
        <taxon>Vertebrata</taxon>
        <taxon>Euteleostomi</taxon>
        <taxon>Amphibia</taxon>
        <taxon>Batrachia</taxon>
        <taxon>Anura</taxon>
        <taxon>Pipoidea</taxon>
        <taxon>Pipidae</taxon>
        <taxon>Xenopodinae</taxon>
        <taxon>Xenopus</taxon>
        <taxon>Xenopus</taxon>
    </lineage>
</organism>
<accession>Q7ZXY4</accession>
<sequence>MPLGLKPTCSMCKTNTSSMWKKGSQGEILCNNCSGKSSTAAGGNNNNNSSSSTSGSSSYTGTTFASTSTSQQSNGGNTKQSKQEIHRRSARLRNTKYKATPAAEKKVSTKGKGRRHIFKLKNGLYYQIGDVVSVVDEEDGKTYYAQVRGFIQDQYCEKSAALTWLIPTLSSPKDGFDPSTYIIGPDEDLPRKMECLEFVCHAPSEYFKSRSSPFPTIPTRPEKGFIWTHIGPTPAISIKETMANH</sequence>
<feature type="chain" id="PRO_0000288912" description="GATA zinc finger domain-containing protein 1">
    <location>
        <begin position="1"/>
        <end position="245"/>
    </location>
</feature>
<feature type="zinc finger region" description="GATA-type" evidence="2">
    <location>
        <begin position="9"/>
        <end position="33"/>
    </location>
</feature>
<feature type="region of interest" description="Disordered" evidence="3">
    <location>
        <begin position="39"/>
        <end position="110"/>
    </location>
</feature>
<feature type="compositionally biased region" description="Low complexity" evidence="3">
    <location>
        <begin position="39"/>
        <end position="70"/>
    </location>
</feature>
<feature type="compositionally biased region" description="Polar residues" evidence="3">
    <location>
        <begin position="71"/>
        <end position="80"/>
    </location>
</feature>
<evidence type="ECO:0000250" key="1">
    <source>
        <dbReference type="UniProtKB" id="Q8WUU5"/>
    </source>
</evidence>
<evidence type="ECO:0000255" key="2">
    <source>
        <dbReference type="PROSITE-ProRule" id="PRU00094"/>
    </source>
</evidence>
<evidence type="ECO:0000256" key="3">
    <source>
        <dbReference type="SAM" id="MobiDB-lite"/>
    </source>
</evidence>
<protein>
    <recommendedName>
        <fullName>GATA zinc finger domain-containing protein 1</fullName>
    </recommendedName>
</protein>
<name>GATD1_XENLA</name>
<reference key="1">
    <citation type="submission" date="2003-01" db="EMBL/GenBank/DDBJ databases">
        <authorList>
            <consortium name="NIH - Xenopus Gene Collection (XGC) project"/>
        </authorList>
    </citation>
    <scope>NUCLEOTIDE SEQUENCE [LARGE SCALE MRNA]</scope>
    <source>
        <tissue>Embryo</tissue>
    </source>
</reference>
<keyword id="KW-0479">Metal-binding</keyword>
<keyword id="KW-0539">Nucleus</keyword>
<keyword id="KW-1185">Reference proteome</keyword>
<keyword id="KW-0862">Zinc</keyword>
<keyword id="KW-0863">Zinc-finger</keyword>
<proteinExistence type="evidence at transcript level"/>
<comment type="function">
    <text evidence="1">Component of some chromatin complex recruited to chromatin sites methylated 'Lys-4' of histone H3 (H3K4me), with a preference for trimethylated form (H3K4me3).</text>
</comment>
<comment type="subcellular location">
    <subcellularLocation>
        <location evidence="1">Nucleus</location>
    </subcellularLocation>
</comment>